<dbReference type="EC" id="2.4.1.16" evidence="5"/>
<dbReference type="EMBL" id="AF053314">
    <property type="protein sequence ID" value="AAC35278.1"/>
    <property type="molecule type" value="Genomic_DNA"/>
</dbReference>
<dbReference type="EMBL" id="M81907">
    <property type="protein sequence ID" value="AAA30336.1"/>
    <property type="molecule type" value="Genomic_DNA"/>
</dbReference>
<dbReference type="SMR" id="P30602"/>
<dbReference type="CAZy" id="GT2">
    <property type="family name" value="Glycosyltransferase Family 2"/>
</dbReference>
<dbReference type="VEuPathDB" id="FungiDB:HMPREF1120_06479"/>
<dbReference type="PHI-base" id="PHI:237"/>
<dbReference type="GO" id="GO:0030428">
    <property type="term" value="C:cell septum"/>
    <property type="evidence" value="ECO:0007669"/>
    <property type="project" value="TreeGrafter"/>
</dbReference>
<dbReference type="GO" id="GO:0005886">
    <property type="term" value="C:plasma membrane"/>
    <property type="evidence" value="ECO:0007669"/>
    <property type="project" value="UniProtKB-SubCell"/>
</dbReference>
<dbReference type="GO" id="GO:0004100">
    <property type="term" value="F:chitin synthase activity"/>
    <property type="evidence" value="ECO:0007669"/>
    <property type="project" value="UniProtKB-EC"/>
</dbReference>
<dbReference type="GO" id="GO:0071555">
    <property type="term" value="P:cell wall organization"/>
    <property type="evidence" value="ECO:0007669"/>
    <property type="project" value="UniProtKB-KW"/>
</dbReference>
<dbReference type="GO" id="GO:0006031">
    <property type="term" value="P:chitin biosynthetic process"/>
    <property type="evidence" value="ECO:0007669"/>
    <property type="project" value="InterPro"/>
</dbReference>
<dbReference type="CDD" id="cd04190">
    <property type="entry name" value="Chitin_synth_C"/>
    <property type="match status" value="1"/>
</dbReference>
<dbReference type="InterPro" id="IPR004835">
    <property type="entry name" value="Chitin_synth"/>
</dbReference>
<dbReference type="InterPro" id="IPR004834">
    <property type="entry name" value="Chitin_synth_fun"/>
</dbReference>
<dbReference type="InterPro" id="IPR013616">
    <property type="entry name" value="Chitin_synth_N"/>
</dbReference>
<dbReference type="InterPro" id="IPR001173">
    <property type="entry name" value="Glyco_trans_2-like"/>
</dbReference>
<dbReference type="InterPro" id="IPR029044">
    <property type="entry name" value="Nucleotide-diphossugar_trans"/>
</dbReference>
<dbReference type="PANTHER" id="PTHR22914">
    <property type="entry name" value="CHITIN SYNTHASE"/>
    <property type="match status" value="1"/>
</dbReference>
<dbReference type="PANTHER" id="PTHR22914:SF11">
    <property type="entry name" value="CHITIN SYNTHASE B"/>
    <property type="match status" value="1"/>
</dbReference>
<dbReference type="Pfam" id="PF01644">
    <property type="entry name" value="Chitin_synth_1"/>
    <property type="match status" value="1"/>
</dbReference>
<dbReference type="Pfam" id="PF08407">
    <property type="entry name" value="Chitin_synth_1N"/>
    <property type="match status" value="1"/>
</dbReference>
<dbReference type="Pfam" id="PF13632">
    <property type="entry name" value="Glyco_trans_2_3"/>
    <property type="match status" value="1"/>
</dbReference>
<dbReference type="SUPFAM" id="SSF53448">
    <property type="entry name" value="Nucleotide-diphospho-sugar transferases"/>
    <property type="match status" value="1"/>
</dbReference>
<organism>
    <name type="scientific">Exophiala dermatitidis</name>
    <name type="common">Black yeast-like fungus</name>
    <name type="synonym">Wangiella dermatitidis</name>
    <dbReference type="NCBI Taxonomy" id="5970"/>
    <lineage>
        <taxon>Eukaryota</taxon>
        <taxon>Fungi</taxon>
        <taxon>Dikarya</taxon>
        <taxon>Ascomycota</taxon>
        <taxon>Pezizomycotina</taxon>
        <taxon>Eurotiomycetes</taxon>
        <taxon>Chaetothyriomycetidae</taxon>
        <taxon>Chaetothyriales</taxon>
        <taxon>Herpotrichiellaceae</taxon>
        <taxon>Exophiala</taxon>
    </lineage>
</organism>
<gene>
    <name evidence="7" type="primary">CHS3</name>
</gene>
<proteinExistence type="evidence at protein level"/>
<protein>
    <recommendedName>
        <fullName evidence="7">Chitin synthase 3</fullName>
        <ecNumber evidence="5">2.4.1.16</ecNumber>
    </recommendedName>
    <alternativeName>
        <fullName evidence="8">Chitin-UDP acetyl-glucosaminyl transferase 3</fullName>
    </alternativeName>
    <alternativeName>
        <fullName evidence="7">Class-III chitin synthase 3</fullName>
    </alternativeName>
</protein>
<reference key="1">
    <citation type="submission" date="1998-03" db="EMBL/GenBank/DDBJ databases">
        <title>Characterization and expression studies of WdCHS3, a gene that encodes a class III chitin synthase and contributes to virulence in Wangiella (Exophiala) dermatitidis.</title>
        <authorList>
            <person name="Wang Z."/>
            <person name="Graybill J.R."/>
            <person name="Szaniszlo P.J."/>
        </authorList>
    </citation>
    <scope>NUCLEOTIDE SEQUENCE [GENOMIC DNA]</scope>
    <source>
        <strain>8656</strain>
    </source>
</reference>
<reference key="2">
    <citation type="journal article" date="1992" name="Proc. Natl. Acad. Sci. U.S.A.">
        <title>Classification of fungal chitin synthases.</title>
        <authorList>
            <person name="Bowen A.R."/>
            <person name="Chen-Wu J.L.-P."/>
            <person name="Momany M."/>
            <person name="Young R."/>
            <person name="Szaniszlo P.J."/>
            <person name="Robbins P.W."/>
        </authorList>
    </citation>
    <scope>NUCLEOTIDE SEQUENCE [GENOMIC DNA] OF 214-410</scope>
</reference>
<reference key="3">
    <citation type="journal article" date="2000" name="J. Bacteriol.">
        <title>WdCHS3, a gene that encodes a class III chitin synthase in Wangiella (Exophiala) dermatitidis, is expressed differentially under stress conditions.</title>
        <authorList>
            <person name="Wang Z."/>
            <person name="Szaniszlo P.J."/>
        </authorList>
    </citation>
    <scope>FUNCTION</scope>
    <scope>INDUCTION</scope>
    <scope>DISRUPTION PHENOTYPE</scope>
</reference>
<reference key="4">
    <citation type="journal article" date="2001" name="Infect. Immun.">
        <title>WdChs2p, a class I chitin synthase, together with WdChs3p (class III) contributes to virulence in Wangiella (Exophiala) dermatitidis.</title>
        <authorList>
            <person name="Wang Z."/>
            <person name="Zheng L."/>
            <person name="Liu H."/>
            <person name="Wang Q."/>
            <person name="Hauser M."/>
            <person name="Kauffman S."/>
            <person name="Becker J.M."/>
            <person name="Szaniszlo P.J."/>
        </authorList>
    </citation>
    <scope>FUNCTION</scope>
    <scope>DISRUPTION PHENOTYPE</scope>
</reference>
<reference key="5">
    <citation type="journal article" date="2002" name="Med. Mycol.">
        <title>Characterization of WdChs3p, a class III chitin synthase, of Wangiella (Exophiala) dermatitidis, overexpressed in Saccharomyces cerevisiae.</title>
        <authorList>
            <person name="Wang Z."/>
            <person name="Szaniszlo P.J."/>
        </authorList>
    </citation>
    <scope>FUNCTION</scope>
    <scope>CATALYTIC ACTIVITY</scope>
    <scope>BIOPHYSICOCHEMICAL PROPERTIES</scope>
</reference>
<reference key="6">
    <citation type="journal article" date="2002" name="Microbiology">
        <title>Compensatory expression of five chitin synthase genes, a response to stress stimuli, in Wangiella (Exophiala) dermatitidis, a melanized fungal pathogen of humans.</title>
        <authorList>
            <person name="Wang Q."/>
            <person name="Liu H."/>
            <person name="Szaniszlo P.J."/>
        </authorList>
    </citation>
    <scope>INDUCTION</scope>
    <scope>DISRUPTION PHENOTYPE</scope>
</reference>
<keyword id="KW-1003">Cell membrane</keyword>
<keyword id="KW-0961">Cell wall biogenesis/degradation</keyword>
<keyword id="KW-0328">Glycosyltransferase</keyword>
<keyword id="KW-0472">Membrane</keyword>
<keyword id="KW-0808">Transferase</keyword>
<keyword id="KW-0812">Transmembrane</keyword>
<keyword id="KW-1133">Transmembrane helix</keyword>
<feature type="chain" id="PRO_0000193696" description="Chitin synthase 3">
    <location>
        <begin position="1"/>
        <end position="885"/>
    </location>
</feature>
<feature type="transmembrane region" description="Helical" evidence="1">
    <location>
        <begin position="565"/>
        <end position="585"/>
    </location>
</feature>
<feature type="transmembrane region" description="Helical" evidence="1">
    <location>
        <begin position="620"/>
        <end position="640"/>
    </location>
</feature>
<feature type="transmembrane region" description="Helical" evidence="1">
    <location>
        <begin position="650"/>
        <end position="670"/>
    </location>
</feature>
<feature type="transmembrane region" description="Helical" evidence="1">
    <location>
        <begin position="707"/>
        <end position="727"/>
    </location>
</feature>
<feature type="transmembrane region" description="Helical" evidence="1">
    <location>
        <begin position="735"/>
        <end position="755"/>
    </location>
</feature>
<feature type="transmembrane region" description="Helical" evidence="1">
    <location>
        <begin position="837"/>
        <end position="857"/>
    </location>
</feature>
<feature type="region of interest" description="Disordered" evidence="2">
    <location>
        <begin position="1"/>
        <end position="59"/>
    </location>
</feature>
<feature type="compositionally biased region" description="Basic and acidic residues" evidence="2">
    <location>
        <begin position="23"/>
        <end position="34"/>
    </location>
</feature>
<feature type="compositionally biased region" description="Polar residues" evidence="2">
    <location>
        <begin position="36"/>
        <end position="45"/>
    </location>
</feature>
<feature type="sequence conflict" description="In Ref. 2; AAA30336." evidence="8" ref="2">
    <original>Y</original>
    <variation>M</variation>
    <location>
        <position position="215"/>
    </location>
</feature>
<feature type="sequence conflict" description="In Ref. 2; AAA30336." evidence="8" ref="2">
    <original>R</original>
    <variation>S</variation>
    <location>
        <position position="340"/>
    </location>
</feature>
<accession>P30602</accession>
<accession>O74678</accession>
<comment type="function">
    <text evidence="3 4 5">Polymerizes chitin, a structural polymer of the cell wall and septum, by transferring the sugar moiety of UDP-GlcNAc to the non-reducing end of the growing chitin polymer (PubMed:12146758). Is not only stable at different pH, but is also able to tolerate a broad temperature range (PubMed:12146758). With CHS2, plays an important role in virulence (PubMed:10648509, PubMed:11705928).</text>
</comment>
<comment type="catalytic activity">
    <reaction evidence="5">
        <text>[(1-&gt;4)-N-acetyl-beta-D-glucosaminyl](n) + UDP-N-acetyl-alpha-D-glucosamine = [(1-&gt;4)-N-acetyl-beta-D-glucosaminyl](n+1) + UDP + H(+)</text>
        <dbReference type="Rhea" id="RHEA:16637"/>
        <dbReference type="Rhea" id="RHEA-COMP:9593"/>
        <dbReference type="Rhea" id="RHEA-COMP:9595"/>
        <dbReference type="ChEBI" id="CHEBI:15378"/>
        <dbReference type="ChEBI" id="CHEBI:17029"/>
        <dbReference type="ChEBI" id="CHEBI:57705"/>
        <dbReference type="ChEBI" id="CHEBI:58223"/>
        <dbReference type="EC" id="2.4.1.16"/>
    </reaction>
    <physiologicalReaction direction="left-to-right" evidence="5">
        <dbReference type="Rhea" id="RHEA:16638"/>
    </physiologicalReaction>
</comment>
<comment type="biophysicochemical properties">
    <phDependence>
        <text evidence="5">Optimum pH is 6.0 to 10.0.</text>
    </phDependence>
    <temperatureDependence>
        <text evidence="5">Optimum temperature is 25 degrees Celsius to 50 degrees Celsius.</text>
    </temperatureDependence>
</comment>
<comment type="subcellular location">
    <subcellularLocation>
        <location evidence="8">Cell membrane</location>
        <topology evidence="1">Multi-pass membrane protein</topology>
    </subcellularLocation>
</comment>
<comment type="induction">
    <text evidence="3 4 6">Highly expressed under stress conditions, such as the shift of cells to temperatures commensurate with infection, or to conditions that induce cellular morphogenesis in this fungus (PubMed:11705928, PubMed:12213927). The promoter contains a negative regulatory element between -1600 and -780 bp (PubMed:10648509).</text>
</comment>
<comment type="disruption phenotype">
    <text evidence="3 4 6">Results in significantly reduced chitin synthase activities but does not obviously affect cell morphology, growth rates, chitin contents, or virulence (PubMed:10648509). If it does not affect virulence when solely disrupted, the virulence is drastically reduced in a mouse model of acute infection in a doucble CHS2-CHS3 disruptant (PubMed:11705928). Leads to increased expression of the other chitin synthase genes for compensation (PubMed:12213927).</text>
</comment>
<comment type="similarity">
    <text evidence="8">Belongs to the chitin synthase family. Class III subfamily.</text>
</comment>
<sequence length="885" mass="99423">MASQYPGHQLDDIPSTNVYRPPPRHEDDEAEHALLHQNSAYQSQYDDPHSRPLTPGQESVYTLNESYVGGDPSKVPVTSYNPQYTQPYGQGYGMNNSRPGFPTPGPPDPIDRTDSTEAWRERQAPGFGTIKRYATRKVKLVQGSVLSIDYPVPSAIQNAIQAKYRNDLEGGSEEFTHMRYTAATCDPDDFTLKNGYNLRPAMYNRHTELLIAITYYNEDKVLTARTLHGVMQNIRDIVNLKKSEFWNKGGPAWQKIVVCLVFDGIDPCDKNTLDVLATIGVYQDGVMKKDVDGKETVAHIFEYTTQLSVTANQQLIRPNDNDATSLPPAQMIFCLKQKNRKKINSHRWLFNAFGRILNPEVCILLDAGTKPGSKSLMALWQAFYNDKDLGGACGEIHAMLGPGGVFGRKLLNPLVAAQNFEYKISNILDKPLESSFGYVSVLPGAFSAYRFRAIMGRPLEQYFHGDHTLSKTLGKKGIEGMNIFKKNMFLAEDRILCFELVAKAGSKWHLSYVKASKAETDVPEGPPEFIGQRRRWLNGSFAASMYCLMHFSRMYKSGHNLIRMFFLHIQMIYNIVSVLLSWFSLASFWLTTKVLMDLVGQPSTSNDNAAFPFGNTATPIINTILQYLYLAFLLLQFILALGNRPKGSKVAYIISFCLFGLIQLYVIVLSMYLVVRAFTTKNGTDIVTNEGANEFVKSFFASTGPGIVIIALAATFGLYFVASFLYMDPWHMFTSFAQYLLLMPSFINILMIYAFSNWHDVSWGTKGSDKADVLPSAQTKKDEKSKTAVVEEVDKPQADIDSQFEATVRRALAPYKPPEEKEEKTLEDSYKNFRTRLVATWIFSNALLAVAITSDSLDRFGFTSEPLRGPAISSRRFCGLLRPCL</sequence>
<evidence type="ECO:0000255" key="1"/>
<evidence type="ECO:0000256" key="2">
    <source>
        <dbReference type="SAM" id="MobiDB-lite"/>
    </source>
</evidence>
<evidence type="ECO:0000269" key="3">
    <source>
    </source>
</evidence>
<evidence type="ECO:0000269" key="4">
    <source>
    </source>
</evidence>
<evidence type="ECO:0000269" key="5">
    <source>
    </source>
</evidence>
<evidence type="ECO:0000269" key="6">
    <source>
    </source>
</evidence>
<evidence type="ECO:0000303" key="7">
    <source>
    </source>
</evidence>
<evidence type="ECO:0000305" key="8"/>
<name>CHS3_EXODE</name>